<sequence length="124" mass="14703">MVEPNISAYLQNQLRQAQELEENIEKLATQRYQLDLSLKEMQKTLDELNKLDDNTPIYRTVGSILYRVQDKKKLVDELDEQIELTKIRLSTLEKQQKSLEEKYKELQNAIRDRYNQENKKGATS</sequence>
<evidence type="ECO:0000250" key="1"/>
<evidence type="ECO:0000305" key="2"/>
<name>PFDB_THEAC</name>
<accession>Q9HJ36</accession>
<dbReference type="EMBL" id="AL445066">
    <property type="protein sequence ID" value="CAC12263.1"/>
    <property type="molecule type" value="Genomic_DNA"/>
</dbReference>
<dbReference type="RefSeq" id="WP_010901545.1">
    <property type="nucleotide sequence ID" value="NC_002578.1"/>
</dbReference>
<dbReference type="SMR" id="Q9HJ36"/>
<dbReference type="FunCoup" id="Q9HJ36">
    <property type="interactions" value="157"/>
</dbReference>
<dbReference type="STRING" id="273075.gene:9572359"/>
<dbReference type="PaxDb" id="273075-Ta1137"/>
<dbReference type="EnsemblBacteria" id="CAC12263">
    <property type="protein sequence ID" value="CAC12263"/>
    <property type="gene ID" value="CAC12263"/>
</dbReference>
<dbReference type="KEGG" id="tac:Ta1137"/>
<dbReference type="eggNOG" id="arCOG01342">
    <property type="taxonomic scope" value="Archaea"/>
</dbReference>
<dbReference type="HOGENOM" id="CLU_131909_0_0_2"/>
<dbReference type="InParanoid" id="Q9HJ36"/>
<dbReference type="OrthoDB" id="56001at2157"/>
<dbReference type="Proteomes" id="UP000001024">
    <property type="component" value="Chromosome"/>
</dbReference>
<dbReference type="GO" id="GO:0005737">
    <property type="term" value="C:cytoplasm"/>
    <property type="evidence" value="ECO:0007669"/>
    <property type="project" value="UniProtKB-SubCell"/>
</dbReference>
<dbReference type="GO" id="GO:0016272">
    <property type="term" value="C:prefoldin complex"/>
    <property type="evidence" value="ECO:0007669"/>
    <property type="project" value="UniProtKB-UniRule"/>
</dbReference>
<dbReference type="GO" id="GO:0051082">
    <property type="term" value="F:unfolded protein binding"/>
    <property type="evidence" value="ECO:0007669"/>
    <property type="project" value="UniProtKB-UniRule"/>
</dbReference>
<dbReference type="GO" id="GO:0006457">
    <property type="term" value="P:protein folding"/>
    <property type="evidence" value="ECO:0007669"/>
    <property type="project" value="UniProtKB-UniRule"/>
</dbReference>
<dbReference type="CDD" id="cd23162">
    <property type="entry name" value="Prefoldin_beta_GimC"/>
    <property type="match status" value="1"/>
</dbReference>
<dbReference type="Gene3D" id="1.10.287.370">
    <property type="match status" value="1"/>
</dbReference>
<dbReference type="HAMAP" id="MF_00307">
    <property type="entry name" value="PfdB"/>
    <property type="match status" value="1"/>
</dbReference>
<dbReference type="InterPro" id="IPR002777">
    <property type="entry name" value="PFD_beta-like"/>
</dbReference>
<dbReference type="InterPro" id="IPR012713">
    <property type="entry name" value="PfdB"/>
</dbReference>
<dbReference type="InterPro" id="IPR009053">
    <property type="entry name" value="Prefoldin"/>
</dbReference>
<dbReference type="NCBIfam" id="TIGR02338">
    <property type="entry name" value="gimC_beta"/>
    <property type="match status" value="1"/>
</dbReference>
<dbReference type="Pfam" id="PF01920">
    <property type="entry name" value="Prefoldin_2"/>
    <property type="match status" value="1"/>
</dbReference>
<dbReference type="SUPFAM" id="SSF46579">
    <property type="entry name" value="Prefoldin"/>
    <property type="match status" value="1"/>
</dbReference>
<comment type="function">
    <text evidence="1">Molecular chaperone capable of stabilizing a range of proteins. Seems to fulfill an ATP-independent, HSP70-like function in archaeal de novo protein folding (By similarity).</text>
</comment>
<comment type="subunit">
    <text evidence="1">Heterohexamer of two alpha and four beta subunits.</text>
</comment>
<comment type="subcellular location">
    <subcellularLocation>
        <location evidence="1">Cytoplasm</location>
    </subcellularLocation>
</comment>
<comment type="similarity">
    <text evidence="2">Belongs to the prefoldin subunit beta family.</text>
</comment>
<gene>
    <name type="primary">pfdB</name>
    <name type="ordered locus">Ta1137</name>
</gene>
<proteinExistence type="inferred from homology"/>
<reference key="1">
    <citation type="journal article" date="2000" name="Nature">
        <title>The genome sequence of the thermoacidophilic scavenger Thermoplasma acidophilum.</title>
        <authorList>
            <person name="Ruepp A."/>
            <person name="Graml W."/>
            <person name="Santos-Martinez M.-L."/>
            <person name="Koretke K.K."/>
            <person name="Volker C."/>
            <person name="Mewes H.-W."/>
            <person name="Frishman D."/>
            <person name="Stocker S."/>
            <person name="Lupas A.N."/>
            <person name="Baumeister W."/>
        </authorList>
    </citation>
    <scope>NUCLEOTIDE SEQUENCE [LARGE SCALE GENOMIC DNA]</scope>
    <source>
        <strain>ATCC 25905 / DSM 1728 / JCM 9062 / NBRC 15155 / AMRC-C165</strain>
    </source>
</reference>
<protein>
    <recommendedName>
        <fullName>Prefoldin subunit beta</fullName>
    </recommendedName>
    <alternativeName>
        <fullName>GimC subunit beta</fullName>
    </alternativeName>
</protein>
<feature type="chain" id="PRO_0000124872" description="Prefoldin subunit beta">
    <location>
        <begin position="1"/>
        <end position="124"/>
    </location>
</feature>
<organism>
    <name type="scientific">Thermoplasma acidophilum (strain ATCC 25905 / DSM 1728 / JCM 9062 / NBRC 15155 / AMRC-C165)</name>
    <dbReference type="NCBI Taxonomy" id="273075"/>
    <lineage>
        <taxon>Archaea</taxon>
        <taxon>Methanobacteriati</taxon>
        <taxon>Thermoplasmatota</taxon>
        <taxon>Thermoplasmata</taxon>
        <taxon>Thermoplasmatales</taxon>
        <taxon>Thermoplasmataceae</taxon>
        <taxon>Thermoplasma</taxon>
    </lineage>
</organism>
<keyword id="KW-0143">Chaperone</keyword>
<keyword id="KW-0963">Cytoplasm</keyword>
<keyword id="KW-1185">Reference proteome</keyword>